<sequence>MSIGDELVDADEVYRQARWKNQFEVLSKLPRVLQERVDAQKPVIEASGNSATPSNASRALVRHQQNPGDVGLVLNKKFADEQGHESVIERHDKLLNQTPRWHAPWHLTRVIHGHHGWVRCIAMDKVDNEWFATGSNDKTIKIWNLASGKLKVTLKAHDMTVRDLAISNRHPYMFSVSEDKTVKCWDLEKNTAIRNYHGHLSGVHTVDIHPTVDVVVTAGRDSVVKVWDIRTRLPVMTLPGHKGPITKVRCLPVDPQVISSSVDASIRLWDLVAGKSMKVLTHHQRTVRDISVHPSEFSFASACTNDIRSWLLPKGELLTNFVSQDLDVINTVSINQDDVLFAGSDNGSLTFFDYKSGHKYQTFKTKEAPGSPESERGILSSTFDGTGLRLLTGETDRTIKIWKQDETASQDTHPNLPWNPKLDSQRL</sequence>
<gene>
    <name type="primary">PRP46</name>
    <name type="ordered locus">CAGL0M02277g</name>
</gene>
<feature type="chain" id="PRO_0000051162" description="Pre-mRNA-splicing factor PRP46">
    <location>
        <begin position="1"/>
        <end position="427"/>
    </location>
</feature>
<feature type="repeat" description="WD 1">
    <location>
        <begin position="113"/>
        <end position="153"/>
    </location>
</feature>
<feature type="repeat" description="WD 2">
    <location>
        <begin position="156"/>
        <end position="195"/>
    </location>
</feature>
<feature type="repeat" description="WD 3">
    <location>
        <begin position="198"/>
        <end position="237"/>
    </location>
</feature>
<feature type="repeat" description="WD 4">
    <location>
        <begin position="240"/>
        <end position="281"/>
    </location>
</feature>
<feature type="repeat" description="WD 5">
    <location>
        <begin position="283"/>
        <end position="322"/>
    </location>
</feature>
<feature type="repeat" description="WD 6">
    <location>
        <begin position="324"/>
        <end position="362"/>
    </location>
</feature>
<feature type="repeat" description="WD 7">
    <location>
        <begin position="373"/>
        <end position="412"/>
    </location>
</feature>
<feature type="region of interest" description="Disordered" evidence="2">
    <location>
        <begin position="404"/>
        <end position="427"/>
    </location>
</feature>
<organism>
    <name type="scientific">Candida glabrata (strain ATCC 2001 / BCRC 20586 / JCM 3761 / NBRC 0622 / NRRL Y-65 / CBS 138)</name>
    <name type="common">Yeast</name>
    <name type="synonym">Nakaseomyces glabratus</name>
    <dbReference type="NCBI Taxonomy" id="284593"/>
    <lineage>
        <taxon>Eukaryota</taxon>
        <taxon>Fungi</taxon>
        <taxon>Dikarya</taxon>
        <taxon>Ascomycota</taxon>
        <taxon>Saccharomycotina</taxon>
        <taxon>Saccharomycetes</taxon>
        <taxon>Saccharomycetales</taxon>
        <taxon>Saccharomycetaceae</taxon>
        <taxon>Nakaseomyces</taxon>
    </lineage>
</organism>
<name>PRP46_CANGA</name>
<dbReference type="EMBL" id="CR380959">
    <property type="protein sequence ID" value="CAG62421.1"/>
    <property type="molecule type" value="Genomic_DNA"/>
</dbReference>
<dbReference type="RefSeq" id="XP_449445.1">
    <property type="nucleotide sequence ID" value="XM_449445.1"/>
</dbReference>
<dbReference type="SMR" id="Q6FJZ9"/>
<dbReference type="FunCoup" id="Q6FJZ9">
    <property type="interactions" value="1061"/>
</dbReference>
<dbReference type="STRING" id="284593.Q6FJZ9"/>
<dbReference type="EnsemblFungi" id="CAGL0M02277g-T">
    <property type="protein sequence ID" value="CAGL0M02277g-T-p1"/>
    <property type="gene ID" value="CAGL0M02277g"/>
</dbReference>
<dbReference type="KEGG" id="cgr:2891771"/>
<dbReference type="CGD" id="CAL0136351">
    <property type="gene designation" value="CAGL0M02277g"/>
</dbReference>
<dbReference type="VEuPathDB" id="FungiDB:B1J91_M02277g"/>
<dbReference type="VEuPathDB" id="FungiDB:CAGL0M02277g"/>
<dbReference type="eggNOG" id="KOG0285">
    <property type="taxonomic scope" value="Eukaryota"/>
</dbReference>
<dbReference type="HOGENOM" id="CLU_000288_72_0_1"/>
<dbReference type="InParanoid" id="Q6FJZ9"/>
<dbReference type="OMA" id="FAMCFDQ"/>
<dbReference type="Proteomes" id="UP000002428">
    <property type="component" value="Chromosome M"/>
</dbReference>
<dbReference type="GO" id="GO:0071013">
    <property type="term" value="C:catalytic step 2 spliceosome"/>
    <property type="evidence" value="ECO:0007669"/>
    <property type="project" value="TreeGrafter"/>
</dbReference>
<dbReference type="GO" id="GO:0005737">
    <property type="term" value="C:cytoplasm"/>
    <property type="evidence" value="ECO:0007669"/>
    <property type="project" value="UniProtKB-SubCell"/>
</dbReference>
<dbReference type="GO" id="GO:0071014">
    <property type="term" value="C:post-mRNA release spliceosomal complex"/>
    <property type="evidence" value="ECO:0007669"/>
    <property type="project" value="EnsemblFungi"/>
</dbReference>
<dbReference type="GO" id="GO:0071011">
    <property type="term" value="C:precatalytic spliceosome"/>
    <property type="evidence" value="ECO:0007669"/>
    <property type="project" value="TreeGrafter"/>
</dbReference>
<dbReference type="GO" id="GO:0000974">
    <property type="term" value="C:Prp19 complex"/>
    <property type="evidence" value="ECO:0007669"/>
    <property type="project" value="EnsemblFungi"/>
</dbReference>
<dbReference type="GO" id="GO:0045292">
    <property type="term" value="P:mRNA cis splicing, via spliceosome"/>
    <property type="evidence" value="ECO:0007669"/>
    <property type="project" value="EnsemblFungi"/>
</dbReference>
<dbReference type="CDD" id="cd00200">
    <property type="entry name" value="WD40"/>
    <property type="match status" value="1"/>
</dbReference>
<dbReference type="FunFam" id="2.130.10.10:FF:000012">
    <property type="entry name" value="Putative pleiotropic regulator 1"/>
    <property type="match status" value="1"/>
</dbReference>
<dbReference type="Gene3D" id="2.130.10.10">
    <property type="entry name" value="YVTN repeat-like/Quinoprotein amine dehydrogenase"/>
    <property type="match status" value="1"/>
</dbReference>
<dbReference type="InterPro" id="IPR020472">
    <property type="entry name" value="G-protein_beta_WD-40_rep"/>
</dbReference>
<dbReference type="InterPro" id="IPR045241">
    <property type="entry name" value="Prp46/PLRG1-like"/>
</dbReference>
<dbReference type="InterPro" id="IPR015943">
    <property type="entry name" value="WD40/YVTN_repeat-like_dom_sf"/>
</dbReference>
<dbReference type="InterPro" id="IPR019775">
    <property type="entry name" value="WD40_repeat_CS"/>
</dbReference>
<dbReference type="InterPro" id="IPR036322">
    <property type="entry name" value="WD40_repeat_dom_sf"/>
</dbReference>
<dbReference type="InterPro" id="IPR001680">
    <property type="entry name" value="WD40_rpt"/>
</dbReference>
<dbReference type="PANTHER" id="PTHR19923:SF0">
    <property type="entry name" value="PLEIOTROPIC REGULATOR 1"/>
    <property type="match status" value="1"/>
</dbReference>
<dbReference type="PANTHER" id="PTHR19923">
    <property type="entry name" value="WD40 REPEAT PROTEINPRL1/PRL2-RELATED"/>
    <property type="match status" value="1"/>
</dbReference>
<dbReference type="Pfam" id="PF00400">
    <property type="entry name" value="WD40"/>
    <property type="match status" value="5"/>
</dbReference>
<dbReference type="PRINTS" id="PR00320">
    <property type="entry name" value="GPROTEINBRPT"/>
</dbReference>
<dbReference type="SMART" id="SM00320">
    <property type="entry name" value="WD40"/>
    <property type="match status" value="7"/>
</dbReference>
<dbReference type="SUPFAM" id="SSF50978">
    <property type="entry name" value="WD40 repeat-like"/>
    <property type="match status" value="1"/>
</dbReference>
<dbReference type="PROSITE" id="PS00678">
    <property type="entry name" value="WD_REPEATS_1"/>
    <property type="match status" value="2"/>
</dbReference>
<dbReference type="PROSITE" id="PS50082">
    <property type="entry name" value="WD_REPEATS_2"/>
    <property type="match status" value="4"/>
</dbReference>
<dbReference type="PROSITE" id="PS50294">
    <property type="entry name" value="WD_REPEATS_REGION"/>
    <property type="match status" value="1"/>
</dbReference>
<proteinExistence type="inferred from homology"/>
<accession>Q6FJZ9</accession>
<reference key="1">
    <citation type="journal article" date="2004" name="Nature">
        <title>Genome evolution in yeasts.</title>
        <authorList>
            <person name="Dujon B."/>
            <person name="Sherman D."/>
            <person name="Fischer G."/>
            <person name="Durrens P."/>
            <person name="Casaregola S."/>
            <person name="Lafontaine I."/>
            <person name="de Montigny J."/>
            <person name="Marck C."/>
            <person name="Neuveglise C."/>
            <person name="Talla E."/>
            <person name="Goffard N."/>
            <person name="Frangeul L."/>
            <person name="Aigle M."/>
            <person name="Anthouard V."/>
            <person name="Babour A."/>
            <person name="Barbe V."/>
            <person name="Barnay S."/>
            <person name="Blanchin S."/>
            <person name="Beckerich J.-M."/>
            <person name="Beyne E."/>
            <person name="Bleykasten C."/>
            <person name="Boisrame A."/>
            <person name="Boyer J."/>
            <person name="Cattolico L."/>
            <person name="Confanioleri F."/>
            <person name="de Daruvar A."/>
            <person name="Despons L."/>
            <person name="Fabre E."/>
            <person name="Fairhead C."/>
            <person name="Ferry-Dumazet H."/>
            <person name="Groppi A."/>
            <person name="Hantraye F."/>
            <person name="Hennequin C."/>
            <person name="Jauniaux N."/>
            <person name="Joyet P."/>
            <person name="Kachouri R."/>
            <person name="Kerrest A."/>
            <person name="Koszul R."/>
            <person name="Lemaire M."/>
            <person name="Lesur I."/>
            <person name="Ma L."/>
            <person name="Muller H."/>
            <person name="Nicaud J.-M."/>
            <person name="Nikolski M."/>
            <person name="Oztas S."/>
            <person name="Ozier-Kalogeropoulos O."/>
            <person name="Pellenz S."/>
            <person name="Potier S."/>
            <person name="Richard G.-F."/>
            <person name="Straub M.-L."/>
            <person name="Suleau A."/>
            <person name="Swennen D."/>
            <person name="Tekaia F."/>
            <person name="Wesolowski-Louvel M."/>
            <person name="Westhof E."/>
            <person name="Wirth B."/>
            <person name="Zeniou-Meyer M."/>
            <person name="Zivanovic Y."/>
            <person name="Bolotin-Fukuhara M."/>
            <person name="Thierry A."/>
            <person name="Bouchier C."/>
            <person name="Caudron B."/>
            <person name="Scarpelli C."/>
            <person name="Gaillardin C."/>
            <person name="Weissenbach J."/>
            <person name="Wincker P."/>
            <person name="Souciet J.-L."/>
        </authorList>
    </citation>
    <scope>NUCLEOTIDE SEQUENCE [LARGE SCALE GENOMIC DNA]</scope>
    <source>
        <strain>ATCC 2001 / BCRC 20586 / JCM 3761 / NBRC 0622 / NRRL Y-65 / CBS 138</strain>
    </source>
</reference>
<keyword id="KW-0963">Cytoplasm</keyword>
<keyword id="KW-0507">mRNA processing</keyword>
<keyword id="KW-0508">mRNA splicing</keyword>
<keyword id="KW-0539">Nucleus</keyword>
<keyword id="KW-1185">Reference proteome</keyword>
<keyword id="KW-0677">Repeat</keyword>
<keyword id="KW-0747">Spliceosome</keyword>
<keyword id="KW-0853">WD repeat</keyword>
<evidence type="ECO:0000250" key="1"/>
<evidence type="ECO:0000256" key="2">
    <source>
        <dbReference type="SAM" id="MobiDB-lite"/>
    </source>
</evidence>
<evidence type="ECO:0000305" key="3"/>
<protein>
    <recommendedName>
        <fullName>Pre-mRNA-splicing factor PRP46</fullName>
    </recommendedName>
    <alternativeName>
        <fullName>Pre-mRNA-processing protein 46</fullName>
    </alternativeName>
</protein>
<comment type="function">
    <text evidence="1">Involved in pre-mRNA splicing and required for cell cycle progression at G2/M.</text>
</comment>
<comment type="subunit">
    <text evidence="1">Associated with the spliceosome.</text>
</comment>
<comment type="subcellular location">
    <subcellularLocation>
        <location evidence="1">Cytoplasm</location>
    </subcellularLocation>
    <subcellularLocation>
        <location evidence="1">Nucleus</location>
    </subcellularLocation>
</comment>
<comment type="similarity">
    <text evidence="3">Belongs to the WD repeat PRL1/PRL2 family.</text>
</comment>